<comment type="function">
    <text>Has beta-carotene-binding activity. May be involved in the transport of carotenes from internal tissues to epidermis and cuticle of the locust.</text>
</comment>
<comment type="tissue specificity">
    <text>Deposited in the epidermis and cuticle of male locusts during their sexual maturation.</text>
</comment>
<accession>P82886</accession>
<organism>
    <name type="scientific">Schistocerca gregaria</name>
    <name type="common">Desert locust</name>
    <name type="synonym">Gryllus gregarius</name>
    <dbReference type="NCBI Taxonomy" id="7010"/>
    <lineage>
        <taxon>Eukaryota</taxon>
        <taxon>Metazoa</taxon>
        <taxon>Ecdysozoa</taxon>
        <taxon>Arthropoda</taxon>
        <taxon>Hexapoda</taxon>
        <taxon>Insecta</taxon>
        <taxon>Pterygota</taxon>
        <taxon>Neoptera</taxon>
        <taxon>Polyneoptera</taxon>
        <taxon>Orthoptera</taxon>
        <taxon>Caelifera</taxon>
        <taxon>Acrididea</taxon>
        <taxon>Acridomorpha</taxon>
        <taxon>Acridoidea</taxon>
        <taxon>Acrididae</taxon>
        <taxon>Cyrtacanthacridinae</taxon>
        <taxon>Schistocerca</taxon>
    </lineage>
</organism>
<reference key="1">
    <citation type="journal article" date="2001" name="Insect Biochem. Mol. Biol.">
        <title>Purification and sequence determination of a yellow protein from sexually mature males of the desert locust, Schistocerca gregaria.</title>
        <authorList>
            <person name="Wybrandt G.B."/>
            <person name="Andersen S.O."/>
        </authorList>
    </citation>
    <scope>PROTEIN SEQUENCE</scope>
    <source>
        <tissue>Cuticle</tissue>
    </source>
</reference>
<name>PBCB_SCHGR</name>
<dbReference type="SMR" id="P82886"/>
<dbReference type="OrthoDB" id="7370369at2759"/>
<dbReference type="GO" id="GO:0005615">
    <property type="term" value="C:extracellular space"/>
    <property type="evidence" value="ECO:0007669"/>
    <property type="project" value="TreeGrafter"/>
</dbReference>
<dbReference type="Gene3D" id="3.15.10.30">
    <property type="entry name" value="Haemolymph juvenile hormone binding protein"/>
    <property type="match status" value="1"/>
</dbReference>
<dbReference type="InterPro" id="IPR010562">
    <property type="entry name" value="Haemolymph_juvenile_hormone-bd"/>
</dbReference>
<dbReference type="InterPro" id="IPR038606">
    <property type="entry name" value="To_sf"/>
</dbReference>
<dbReference type="PANTHER" id="PTHR11008:SF18">
    <property type="entry name" value="BCDNA.GH05536-RELATED"/>
    <property type="match status" value="1"/>
</dbReference>
<dbReference type="PANTHER" id="PTHR11008">
    <property type="entry name" value="PROTEIN TAKEOUT-LIKE PROTEIN"/>
    <property type="match status" value="1"/>
</dbReference>
<dbReference type="Pfam" id="PF06585">
    <property type="entry name" value="JHBP"/>
    <property type="match status" value="1"/>
</dbReference>
<dbReference type="SMART" id="SM00700">
    <property type="entry name" value="JHBP"/>
    <property type="match status" value="1"/>
</dbReference>
<sequence>GVQTSNASSPDFQLLVRASLQQLIPELASGVPSIGAEGVDPLRGLPPIVHNSNGFKVQLDDVSISGLSATLINDVNVDLTSNTIRIQATVPGYITATGIQTTDAEIMGIPLKGSGPFTISLANPSLAVTLTGAPSAGPNGQTYLRLTSASAAIEPGTPTADIKGFFPQFPPLEAAASAFASVVAPDVVQSLKPTLDKWLGGVALQRAQAVFSSVSYDALFPGRTPAAVGLYRAVPGLHTLPLPLSAFAYH</sequence>
<protein>
    <recommendedName>
        <fullName>Putative beta-carotene-binding protein</fullName>
    </recommendedName>
</protein>
<keyword id="KW-0903">Direct protein sequencing</keyword>
<keyword id="KW-0813">Transport</keyword>
<proteinExistence type="evidence at protein level"/>
<feature type="chain" id="PRO_0000058242" description="Putative beta-carotene-binding protein">
    <location>
        <begin position="1"/>
        <end position="250"/>
    </location>
</feature>